<accession>Q03AW0</accession>
<dbReference type="EC" id="1.18.1.2" evidence="1"/>
<dbReference type="EMBL" id="CP000423">
    <property type="protein sequence ID" value="ABJ69662.1"/>
    <property type="molecule type" value="Genomic_DNA"/>
</dbReference>
<dbReference type="RefSeq" id="WP_003566813.1">
    <property type="nucleotide sequence ID" value="NC_008526.1"/>
</dbReference>
<dbReference type="RefSeq" id="YP_806104.1">
    <property type="nucleotide sequence ID" value="NC_008526.1"/>
</dbReference>
<dbReference type="SMR" id="Q03AW0"/>
<dbReference type="STRING" id="321967.LSEI_0826"/>
<dbReference type="PaxDb" id="321967-LSEI_0826"/>
<dbReference type="KEGG" id="lca:LSEI_0826"/>
<dbReference type="PATRIC" id="fig|321967.11.peg.826"/>
<dbReference type="HOGENOM" id="CLU_031864_5_5_9"/>
<dbReference type="Proteomes" id="UP000001651">
    <property type="component" value="Chromosome"/>
</dbReference>
<dbReference type="GO" id="GO:0004324">
    <property type="term" value="F:ferredoxin-NADP+ reductase activity"/>
    <property type="evidence" value="ECO:0007669"/>
    <property type="project" value="UniProtKB-UniRule"/>
</dbReference>
<dbReference type="GO" id="GO:0050660">
    <property type="term" value="F:flavin adenine dinucleotide binding"/>
    <property type="evidence" value="ECO:0007669"/>
    <property type="project" value="UniProtKB-UniRule"/>
</dbReference>
<dbReference type="GO" id="GO:0050661">
    <property type="term" value="F:NADP binding"/>
    <property type="evidence" value="ECO:0007669"/>
    <property type="project" value="UniProtKB-UniRule"/>
</dbReference>
<dbReference type="Gene3D" id="3.50.50.60">
    <property type="entry name" value="FAD/NAD(P)-binding domain"/>
    <property type="match status" value="2"/>
</dbReference>
<dbReference type="HAMAP" id="MF_01685">
    <property type="entry name" value="FENR2"/>
    <property type="match status" value="1"/>
</dbReference>
<dbReference type="InterPro" id="IPR036188">
    <property type="entry name" value="FAD/NAD-bd_sf"/>
</dbReference>
<dbReference type="InterPro" id="IPR023753">
    <property type="entry name" value="FAD/NAD-binding_dom"/>
</dbReference>
<dbReference type="InterPro" id="IPR022890">
    <property type="entry name" value="Fd--NADP_Rdtase_type_2"/>
</dbReference>
<dbReference type="InterPro" id="IPR050097">
    <property type="entry name" value="Ferredoxin-NADP_redctase_2"/>
</dbReference>
<dbReference type="PANTHER" id="PTHR48105">
    <property type="entry name" value="THIOREDOXIN REDUCTASE 1-RELATED-RELATED"/>
    <property type="match status" value="1"/>
</dbReference>
<dbReference type="Pfam" id="PF07992">
    <property type="entry name" value="Pyr_redox_2"/>
    <property type="match status" value="1"/>
</dbReference>
<dbReference type="PRINTS" id="PR00368">
    <property type="entry name" value="FADPNR"/>
</dbReference>
<dbReference type="PRINTS" id="PR00469">
    <property type="entry name" value="PNDRDTASEII"/>
</dbReference>
<dbReference type="SUPFAM" id="SSF51905">
    <property type="entry name" value="FAD/NAD(P)-binding domain"/>
    <property type="match status" value="1"/>
</dbReference>
<evidence type="ECO:0000255" key="1">
    <source>
        <dbReference type="HAMAP-Rule" id="MF_01685"/>
    </source>
</evidence>
<reference key="1">
    <citation type="journal article" date="2006" name="Proc. Natl. Acad. Sci. U.S.A.">
        <title>Comparative genomics of the lactic acid bacteria.</title>
        <authorList>
            <person name="Makarova K.S."/>
            <person name="Slesarev A."/>
            <person name="Wolf Y.I."/>
            <person name="Sorokin A."/>
            <person name="Mirkin B."/>
            <person name="Koonin E.V."/>
            <person name="Pavlov A."/>
            <person name="Pavlova N."/>
            <person name="Karamychev V."/>
            <person name="Polouchine N."/>
            <person name="Shakhova V."/>
            <person name="Grigoriev I."/>
            <person name="Lou Y."/>
            <person name="Rohksar D."/>
            <person name="Lucas S."/>
            <person name="Huang K."/>
            <person name="Goodstein D.M."/>
            <person name="Hawkins T."/>
            <person name="Plengvidhya V."/>
            <person name="Welker D."/>
            <person name="Hughes J."/>
            <person name="Goh Y."/>
            <person name="Benson A."/>
            <person name="Baldwin K."/>
            <person name="Lee J.-H."/>
            <person name="Diaz-Muniz I."/>
            <person name="Dosti B."/>
            <person name="Smeianov V."/>
            <person name="Wechter W."/>
            <person name="Barabote R."/>
            <person name="Lorca G."/>
            <person name="Altermann E."/>
            <person name="Barrangou R."/>
            <person name="Ganesan B."/>
            <person name="Xie Y."/>
            <person name="Rawsthorne H."/>
            <person name="Tamir D."/>
            <person name="Parker C."/>
            <person name="Breidt F."/>
            <person name="Broadbent J.R."/>
            <person name="Hutkins R."/>
            <person name="O'Sullivan D."/>
            <person name="Steele J."/>
            <person name="Unlu G."/>
            <person name="Saier M.H. Jr."/>
            <person name="Klaenhammer T."/>
            <person name="Richardson P."/>
            <person name="Kozyavkin S."/>
            <person name="Weimer B.C."/>
            <person name="Mills D.A."/>
        </authorList>
    </citation>
    <scope>NUCLEOTIDE SEQUENCE [LARGE SCALE GENOMIC DNA]</scope>
    <source>
        <strain>ATCC 334 / BCRC 17002 / CCUG 31169 / CIP 107868 / KCTC 3260 / NRRL B-441</strain>
    </source>
</reference>
<keyword id="KW-0274">FAD</keyword>
<keyword id="KW-0285">Flavoprotein</keyword>
<keyword id="KW-0521">NADP</keyword>
<keyword id="KW-0560">Oxidoreductase</keyword>
<keyword id="KW-1185">Reference proteome</keyword>
<sequence>MSVQHVYEITVIGGGPVGMFAAFYAGLRQADVLLLESLDELGGQTGNLYPAKILYDIGGFPHVSGKDLVTQLKTQLVHFHPEVKTATEVQTIDQDPDGFFTLHTSQGDFRSKTVIVATGGGAFTPRKLAVDYDPALEGKKLFYFVQDLETFRDQEVAVAGGGDSAIDWALALEPVAKHVSLIHRRAKFRGLEASVAALEKSSVTIQTPYLIESVTPQDDQLAIQLKEVRGEAQPTLTVDKLLINYGFVTDKHHLQAWQLDTDRNGILVDTQMQTSRPGIFAIGDAVSYAGKLPLIASGFGEAPTAINEALSRLYPDRRQALHSTQLYH</sequence>
<feature type="chain" id="PRO_0000364849" description="Ferredoxin--NADP reductase">
    <location>
        <begin position="1"/>
        <end position="328"/>
    </location>
</feature>
<feature type="binding site" evidence="1">
    <location>
        <position position="36"/>
    </location>
    <ligand>
        <name>FAD</name>
        <dbReference type="ChEBI" id="CHEBI:57692"/>
    </ligand>
</feature>
<feature type="binding site" evidence="1">
    <location>
        <position position="44"/>
    </location>
    <ligand>
        <name>FAD</name>
        <dbReference type="ChEBI" id="CHEBI:57692"/>
    </ligand>
</feature>
<feature type="binding site" evidence="1">
    <location>
        <position position="49"/>
    </location>
    <ligand>
        <name>FAD</name>
        <dbReference type="ChEBI" id="CHEBI:57692"/>
    </ligand>
</feature>
<feature type="binding site" evidence="1">
    <location>
        <position position="89"/>
    </location>
    <ligand>
        <name>FAD</name>
        <dbReference type="ChEBI" id="CHEBI:57692"/>
    </ligand>
</feature>
<feature type="binding site" evidence="1">
    <location>
        <position position="123"/>
    </location>
    <ligand>
        <name>FAD</name>
        <dbReference type="ChEBI" id="CHEBI:57692"/>
    </ligand>
</feature>
<feature type="binding site" evidence="1">
    <location>
        <position position="284"/>
    </location>
    <ligand>
        <name>FAD</name>
        <dbReference type="ChEBI" id="CHEBI:57692"/>
    </ligand>
</feature>
<feature type="binding site" evidence="1">
    <location>
        <position position="324"/>
    </location>
    <ligand>
        <name>FAD</name>
        <dbReference type="ChEBI" id="CHEBI:57692"/>
    </ligand>
</feature>
<name>FENR_LACP3</name>
<organism>
    <name type="scientific">Lacticaseibacillus paracasei (strain ATCC 334 / BCRC 17002 / CCUG 31169 / CIP 107868 / KCTC 3260 / NRRL B-441)</name>
    <name type="common">Lactobacillus paracasei</name>
    <dbReference type="NCBI Taxonomy" id="321967"/>
    <lineage>
        <taxon>Bacteria</taxon>
        <taxon>Bacillati</taxon>
        <taxon>Bacillota</taxon>
        <taxon>Bacilli</taxon>
        <taxon>Lactobacillales</taxon>
        <taxon>Lactobacillaceae</taxon>
        <taxon>Lacticaseibacillus</taxon>
    </lineage>
</organism>
<protein>
    <recommendedName>
        <fullName evidence="1">Ferredoxin--NADP reductase</fullName>
        <shortName evidence="1">FNR</shortName>
        <shortName evidence="1">Fd-NADP(+) reductase</shortName>
        <ecNumber evidence="1">1.18.1.2</ecNumber>
    </recommendedName>
</protein>
<proteinExistence type="inferred from homology"/>
<gene>
    <name type="ordered locus">LSEI_0826</name>
</gene>
<comment type="catalytic activity">
    <reaction evidence="1">
        <text>2 reduced [2Fe-2S]-[ferredoxin] + NADP(+) + H(+) = 2 oxidized [2Fe-2S]-[ferredoxin] + NADPH</text>
        <dbReference type="Rhea" id="RHEA:20125"/>
        <dbReference type="Rhea" id="RHEA-COMP:10000"/>
        <dbReference type="Rhea" id="RHEA-COMP:10001"/>
        <dbReference type="ChEBI" id="CHEBI:15378"/>
        <dbReference type="ChEBI" id="CHEBI:33737"/>
        <dbReference type="ChEBI" id="CHEBI:33738"/>
        <dbReference type="ChEBI" id="CHEBI:57783"/>
        <dbReference type="ChEBI" id="CHEBI:58349"/>
        <dbReference type="EC" id="1.18.1.2"/>
    </reaction>
</comment>
<comment type="cofactor">
    <cofactor evidence="1">
        <name>FAD</name>
        <dbReference type="ChEBI" id="CHEBI:57692"/>
    </cofactor>
    <text evidence="1">Binds 1 FAD per subunit.</text>
</comment>
<comment type="subunit">
    <text evidence="1">Homodimer.</text>
</comment>
<comment type="similarity">
    <text evidence="1">Belongs to the ferredoxin--NADP reductase type 2 family.</text>
</comment>